<gene>
    <name evidence="1" type="primary">rpoA</name>
    <name type="ordered locus">Smlt0931</name>
</gene>
<keyword id="KW-0240">DNA-directed RNA polymerase</keyword>
<keyword id="KW-0548">Nucleotidyltransferase</keyword>
<keyword id="KW-1185">Reference proteome</keyword>
<keyword id="KW-0804">Transcription</keyword>
<keyword id="KW-0808">Transferase</keyword>
<comment type="function">
    <text evidence="1">DNA-dependent RNA polymerase catalyzes the transcription of DNA into RNA using the four ribonucleoside triphosphates as substrates.</text>
</comment>
<comment type="catalytic activity">
    <reaction evidence="1">
        <text>RNA(n) + a ribonucleoside 5'-triphosphate = RNA(n+1) + diphosphate</text>
        <dbReference type="Rhea" id="RHEA:21248"/>
        <dbReference type="Rhea" id="RHEA-COMP:14527"/>
        <dbReference type="Rhea" id="RHEA-COMP:17342"/>
        <dbReference type="ChEBI" id="CHEBI:33019"/>
        <dbReference type="ChEBI" id="CHEBI:61557"/>
        <dbReference type="ChEBI" id="CHEBI:140395"/>
        <dbReference type="EC" id="2.7.7.6"/>
    </reaction>
</comment>
<comment type="subunit">
    <text evidence="1">Homodimer. The RNAP catalytic core consists of 2 alpha, 1 beta, 1 beta' and 1 omega subunit. When a sigma factor is associated with the core the holoenzyme is formed, which can initiate transcription.</text>
</comment>
<comment type="domain">
    <text evidence="1">The N-terminal domain is essential for RNAP assembly and basal transcription, whereas the C-terminal domain is involved in interaction with transcriptional regulators and with upstream promoter elements.</text>
</comment>
<comment type="similarity">
    <text evidence="1">Belongs to the RNA polymerase alpha chain family.</text>
</comment>
<sequence length="332" mass="36316">MTVTANQVLRPRGPQIERLTDTRAKVVIEPLERGYGHTLGNALRRVLLSSIPGFAITEVEIDGVLHEYTTVEGLQEDVLEVLLNLKDVAIRMHSGDSATLSLSKQGPGVVTAADIKVDHNVEILNGDHVICHLTKDTAINMRLKIERGFGYQPAAARRRPDEETRAIGRLVLDASFSPVRRVAYAVEAARVEQRTDLDKLVIDIETNGTIDAEEAVRTAADILSDQLSVFGDFTHRDRGAAKPANNGVDPVLLRPIDDLELTVRSANCLKAESIYYIGDLIQKTEVELLKTPNLGKKSLTEIKEVLAQRGLSLGMKLENWPPAGVASHGMLG</sequence>
<feature type="chain" id="PRO_1000091970" description="DNA-directed RNA polymerase subunit alpha">
    <location>
        <begin position="1"/>
        <end position="332"/>
    </location>
</feature>
<feature type="region of interest" description="Alpha N-terminal domain (alpha-NTD)" evidence="1">
    <location>
        <begin position="1"/>
        <end position="234"/>
    </location>
</feature>
<feature type="region of interest" description="Alpha C-terminal domain (alpha-CTD)" evidence="1">
    <location>
        <begin position="248"/>
        <end position="332"/>
    </location>
</feature>
<proteinExistence type="inferred from homology"/>
<reference key="1">
    <citation type="journal article" date="2008" name="Genome Biol.">
        <title>The complete genome, comparative and functional analysis of Stenotrophomonas maltophilia reveals an organism heavily shielded by drug resistance determinants.</title>
        <authorList>
            <person name="Crossman L.C."/>
            <person name="Gould V.C."/>
            <person name="Dow J.M."/>
            <person name="Vernikos G.S."/>
            <person name="Okazaki A."/>
            <person name="Sebaihia M."/>
            <person name="Saunders D."/>
            <person name="Arrowsmith C."/>
            <person name="Carver T."/>
            <person name="Peters N."/>
            <person name="Adlem E."/>
            <person name="Kerhornou A."/>
            <person name="Lord A."/>
            <person name="Murphy L."/>
            <person name="Seeger K."/>
            <person name="Squares R."/>
            <person name="Rutter S."/>
            <person name="Quail M.A."/>
            <person name="Rajandream M.A."/>
            <person name="Harris D."/>
            <person name="Churcher C."/>
            <person name="Bentley S.D."/>
            <person name="Parkhill J."/>
            <person name="Thomson N.R."/>
            <person name="Avison M.B."/>
        </authorList>
    </citation>
    <scope>NUCLEOTIDE SEQUENCE [LARGE SCALE GENOMIC DNA]</scope>
    <source>
        <strain>K279a</strain>
    </source>
</reference>
<name>RPOA_STRMK</name>
<evidence type="ECO:0000255" key="1">
    <source>
        <dbReference type="HAMAP-Rule" id="MF_00059"/>
    </source>
</evidence>
<dbReference type="EC" id="2.7.7.6" evidence="1"/>
<dbReference type="EMBL" id="AM743169">
    <property type="protein sequence ID" value="CAQ44499.1"/>
    <property type="molecule type" value="Genomic_DNA"/>
</dbReference>
<dbReference type="RefSeq" id="WP_005408216.1">
    <property type="nucleotide sequence ID" value="NC_010943.1"/>
</dbReference>
<dbReference type="SMR" id="B2FQK8"/>
<dbReference type="EnsemblBacteria" id="CAQ44499">
    <property type="protein sequence ID" value="CAQ44499"/>
    <property type="gene ID" value="Smlt0931"/>
</dbReference>
<dbReference type="KEGG" id="sml:Smlt0931"/>
<dbReference type="eggNOG" id="COG0202">
    <property type="taxonomic scope" value="Bacteria"/>
</dbReference>
<dbReference type="HOGENOM" id="CLU_053084_0_0_6"/>
<dbReference type="Proteomes" id="UP000008840">
    <property type="component" value="Chromosome"/>
</dbReference>
<dbReference type="GO" id="GO:0005737">
    <property type="term" value="C:cytoplasm"/>
    <property type="evidence" value="ECO:0007669"/>
    <property type="project" value="UniProtKB-ARBA"/>
</dbReference>
<dbReference type="GO" id="GO:0000428">
    <property type="term" value="C:DNA-directed RNA polymerase complex"/>
    <property type="evidence" value="ECO:0007669"/>
    <property type="project" value="UniProtKB-KW"/>
</dbReference>
<dbReference type="GO" id="GO:0003677">
    <property type="term" value="F:DNA binding"/>
    <property type="evidence" value="ECO:0007669"/>
    <property type="project" value="UniProtKB-UniRule"/>
</dbReference>
<dbReference type="GO" id="GO:0003899">
    <property type="term" value="F:DNA-directed RNA polymerase activity"/>
    <property type="evidence" value="ECO:0007669"/>
    <property type="project" value="UniProtKB-UniRule"/>
</dbReference>
<dbReference type="GO" id="GO:0046983">
    <property type="term" value="F:protein dimerization activity"/>
    <property type="evidence" value="ECO:0007669"/>
    <property type="project" value="InterPro"/>
</dbReference>
<dbReference type="GO" id="GO:0006351">
    <property type="term" value="P:DNA-templated transcription"/>
    <property type="evidence" value="ECO:0007669"/>
    <property type="project" value="UniProtKB-UniRule"/>
</dbReference>
<dbReference type="CDD" id="cd06928">
    <property type="entry name" value="RNAP_alpha_NTD"/>
    <property type="match status" value="1"/>
</dbReference>
<dbReference type="FunFam" id="1.10.150.20:FF:000001">
    <property type="entry name" value="DNA-directed RNA polymerase subunit alpha"/>
    <property type="match status" value="1"/>
</dbReference>
<dbReference type="FunFam" id="2.170.120.12:FF:000001">
    <property type="entry name" value="DNA-directed RNA polymerase subunit alpha"/>
    <property type="match status" value="1"/>
</dbReference>
<dbReference type="Gene3D" id="1.10.150.20">
    <property type="entry name" value="5' to 3' exonuclease, C-terminal subdomain"/>
    <property type="match status" value="1"/>
</dbReference>
<dbReference type="Gene3D" id="2.170.120.12">
    <property type="entry name" value="DNA-directed RNA polymerase, insert domain"/>
    <property type="match status" value="1"/>
</dbReference>
<dbReference type="Gene3D" id="3.30.1360.10">
    <property type="entry name" value="RNA polymerase, RBP11-like subunit"/>
    <property type="match status" value="1"/>
</dbReference>
<dbReference type="HAMAP" id="MF_00059">
    <property type="entry name" value="RNApol_bact_RpoA"/>
    <property type="match status" value="1"/>
</dbReference>
<dbReference type="InterPro" id="IPR011262">
    <property type="entry name" value="DNA-dir_RNA_pol_insert"/>
</dbReference>
<dbReference type="InterPro" id="IPR011263">
    <property type="entry name" value="DNA-dir_RNA_pol_RpoA/D/Rpb3"/>
</dbReference>
<dbReference type="InterPro" id="IPR011773">
    <property type="entry name" value="DNA-dir_RpoA"/>
</dbReference>
<dbReference type="InterPro" id="IPR036603">
    <property type="entry name" value="RBP11-like"/>
</dbReference>
<dbReference type="InterPro" id="IPR011260">
    <property type="entry name" value="RNAP_asu_C"/>
</dbReference>
<dbReference type="InterPro" id="IPR036643">
    <property type="entry name" value="RNApol_insert_sf"/>
</dbReference>
<dbReference type="NCBIfam" id="NF003513">
    <property type="entry name" value="PRK05182.1-2"/>
    <property type="match status" value="1"/>
</dbReference>
<dbReference type="NCBIfam" id="NF003519">
    <property type="entry name" value="PRK05182.2-5"/>
    <property type="match status" value="1"/>
</dbReference>
<dbReference type="NCBIfam" id="TIGR02027">
    <property type="entry name" value="rpoA"/>
    <property type="match status" value="1"/>
</dbReference>
<dbReference type="Pfam" id="PF01000">
    <property type="entry name" value="RNA_pol_A_bac"/>
    <property type="match status" value="1"/>
</dbReference>
<dbReference type="Pfam" id="PF03118">
    <property type="entry name" value="RNA_pol_A_CTD"/>
    <property type="match status" value="1"/>
</dbReference>
<dbReference type="Pfam" id="PF01193">
    <property type="entry name" value="RNA_pol_L"/>
    <property type="match status" value="1"/>
</dbReference>
<dbReference type="SMART" id="SM00662">
    <property type="entry name" value="RPOLD"/>
    <property type="match status" value="1"/>
</dbReference>
<dbReference type="SUPFAM" id="SSF47789">
    <property type="entry name" value="C-terminal domain of RNA polymerase alpha subunit"/>
    <property type="match status" value="1"/>
</dbReference>
<dbReference type="SUPFAM" id="SSF56553">
    <property type="entry name" value="Insert subdomain of RNA polymerase alpha subunit"/>
    <property type="match status" value="1"/>
</dbReference>
<dbReference type="SUPFAM" id="SSF55257">
    <property type="entry name" value="RBP11-like subunits of RNA polymerase"/>
    <property type="match status" value="1"/>
</dbReference>
<organism>
    <name type="scientific">Stenotrophomonas maltophilia (strain K279a)</name>
    <dbReference type="NCBI Taxonomy" id="522373"/>
    <lineage>
        <taxon>Bacteria</taxon>
        <taxon>Pseudomonadati</taxon>
        <taxon>Pseudomonadota</taxon>
        <taxon>Gammaproteobacteria</taxon>
        <taxon>Lysobacterales</taxon>
        <taxon>Lysobacteraceae</taxon>
        <taxon>Stenotrophomonas</taxon>
        <taxon>Stenotrophomonas maltophilia group</taxon>
    </lineage>
</organism>
<protein>
    <recommendedName>
        <fullName evidence="1">DNA-directed RNA polymerase subunit alpha</fullName>
        <shortName evidence="1">RNAP subunit alpha</shortName>
        <ecNumber evidence="1">2.7.7.6</ecNumber>
    </recommendedName>
    <alternativeName>
        <fullName evidence="1">RNA polymerase subunit alpha</fullName>
    </alternativeName>
    <alternativeName>
        <fullName evidence="1">Transcriptase subunit alpha</fullName>
    </alternativeName>
</protein>
<accession>B2FQK8</accession>